<protein>
    <recommendedName>
        <fullName>Cancer/testis antigen 62</fullName>
        <shortName>CT62</shortName>
    </recommendedName>
</protein>
<dbReference type="EMBL" id="BC039359">
    <property type="status" value="NOT_ANNOTATED_CDS"/>
    <property type="molecule type" value="mRNA"/>
</dbReference>
<dbReference type="EMBL" id="BC048128">
    <property type="status" value="NOT_ANNOTATED_CDS"/>
    <property type="molecule type" value="mRNA"/>
</dbReference>
<dbReference type="RefSeq" id="NP_001096128.1">
    <property type="nucleotide sequence ID" value="NM_001102658.1"/>
</dbReference>
<dbReference type="RefSeq" id="XP_006720492.1">
    <property type="nucleotide sequence ID" value="XM_006720429.3"/>
</dbReference>
<dbReference type="BioGRID" id="128233">
    <property type="interactions" value="1"/>
</dbReference>
<dbReference type="STRING" id="9606.ENSP00000399356"/>
<dbReference type="iPTMnet" id="P0C5K7"/>
<dbReference type="PhosphoSitePlus" id="P0C5K7"/>
<dbReference type="BioMuta" id="CT62"/>
<dbReference type="DMDM" id="160380614"/>
<dbReference type="PaxDb" id="9606-ENSP00000399356"/>
<dbReference type="ProteomicsDB" id="52310"/>
<dbReference type="DNASU" id="196993"/>
<dbReference type="UCSC" id="uc002ata.3">
    <property type="organism name" value="human"/>
</dbReference>
<dbReference type="AGR" id="HGNC:27286"/>
<dbReference type="DisGeNET" id="196993"/>
<dbReference type="GeneCards" id="CT62"/>
<dbReference type="HGNC" id="HGNC:27286">
    <property type="gene designation" value="CT62"/>
</dbReference>
<dbReference type="neXtProt" id="NX_P0C5K7"/>
<dbReference type="PharmGKB" id="PA165478559"/>
<dbReference type="eggNOG" id="ENOG502TFJ1">
    <property type="taxonomic scope" value="Eukaryota"/>
</dbReference>
<dbReference type="InParanoid" id="P0C5K7"/>
<dbReference type="PAN-GO" id="P0C5K7">
    <property type="GO annotations" value="0 GO annotations based on evolutionary models"/>
</dbReference>
<dbReference type="PhylomeDB" id="P0C5K7"/>
<dbReference type="PathwayCommons" id="P0C5K7"/>
<dbReference type="SignaLink" id="P0C5K7"/>
<dbReference type="BioGRID-ORCS" id="196993">
    <property type="hits" value="10 hits in 1125 CRISPR screens"/>
</dbReference>
<dbReference type="GenomeRNAi" id="196993"/>
<dbReference type="Pharos" id="P0C5K7">
    <property type="development level" value="Tdark"/>
</dbReference>
<dbReference type="PRO" id="PR:P0C5K7"/>
<dbReference type="Proteomes" id="UP000005640">
    <property type="component" value="Chromosome 15"/>
</dbReference>
<dbReference type="RNAct" id="P0C5K7">
    <property type="molecule type" value="protein"/>
</dbReference>
<feature type="chain" id="PRO_0000308968" description="Cancer/testis antigen 62">
    <location>
        <begin position="1"/>
        <end position="136"/>
    </location>
</feature>
<feature type="region of interest" description="Disordered" evidence="1">
    <location>
        <begin position="1"/>
        <end position="22"/>
    </location>
</feature>
<comment type="tissue specificity">
    <text evidence="2">Testis specific. Expressed in cancer cell lines.</text>
</comment>
<gene>
    <name type="primary">CT62</name>
</gene>
<keyword id="KW-1185">Reference proteome</keyword>
<proteinExistence type="evidence at transcript level"/>
<evidence type="ECO:0000256" key="1">
    <source>
        <dbReference type="SAM" id="MobiDB-lite"/>
    </source>
</evidence>
<evidence type="ECO:0000269" key="2">
    <source>
    </source>
</evidence>
<name>CT62_HUMAN</name>
<accession>P0C5K7</accession>
<sequence>MMHTTSYRRLSPPHLTDQPSAYSHTHRTFSHFSCGSQPAAQRLHVELWNADLQSEFLCPCLGLTLYLTCNPQLGKRKFCSHSSEDMSKMVSRRNVKDSHEVSGSLQATLQVISFSFPFLLHTCSHPLSHPTSGQRR</sequence>
<organism>
    <name type="scientific">Homo sapiens</name>
    <name type="common">Human</name>
    <dbReference type="NCBI Taxonomy" id="9606"/>
    <lineage>
        <taxon>Eukaryota</taxon>
        <taxon>Metazoa</taxon>
        <taxon>Chordata</taxon>
        <taxon>Craniata</taxon>
        <taxon>Vertebrata</taxon>
        <taxon>Euteleostomi</taxon>
        <taxon>Mammalia</taxon>
        <taxon>Eutheria</taxon>
        <taxon>Euarchontoglires</taxon>
        <taxon>Primates</taxon>
        <taxon>Haplorrhini</taxon>
        <taxon>Catarrhini</taxon>
        <taxon>Hominidae</taxon>
        <taxon>Homo</taxon>
    </lineage>
</organism>
<reference key="1">
    <citation type="journal article" date="2004" name="Genome Res.">
        <title>The status, quality, and expansion of the NIH full-length cDNA project: the Mammalian Gene Collection (MGC).</title>
        <authorList>
            <consortium name="The MGC Project Team"/>
        </authorList>
    </citation>
    <scope>NUCLEOTIDE SEQUENCE [LARGE SCALE MRNA]</scope>
    <source>
        <tissue>Testis</tissue>
    </source>
</reference>
<reference key="2">
    <citation type="journal article" date="2005" name="Proc. Natl. Acad. Sci. U.S.A.">
        <title>Identification of cancer/testis-antigen genes by massively parallel signature sequencing.</title>
        <authorList>
            <person name="Chen Y.-T."/>
            <person name="Scanlan M.J."/>
            <person name="Venditti C.A."/>
            <person name="Chua R."/>
            <person name="Theiler G."/>
            <person name="Stevenson B.J."/>
            <person name="Iseli C."/>
            <person name="Gure A.O."/>
            <person name="Vasicek T."/>
            <person name="Strausberg R.L."/>
            <person name="Jongeneel C.V."/>
            <person name="Old L.J."/>
            <person name="Simpson A.J.G."/>
        </authorList>
    </citation>
    <scope>TISSUE SPECIFICITY</scope>
    <scope>IDENTIFICATION AS A CANCER/TESTIS ANTIGEN</scope>
</reference>